<sequence>MTQTFADQKRKTVETAEFTEDGRYKRKVRSFVLRTGRLSEFQKNMMNDNWGTLGLDYQTEPFDFAKIYGNDNPVVLEIGFGMGKSLVDMAFANPDKNYLGIEVHTPGVGACIAYAVEKGGTNLRVICHDATEILRDSIADGALGGLQLFFPDPWHKAKHHKRRIVQPHFVAQVVQKLAGNGFIHMATDWENYAEQMLEVLSANTDLVNTSKNGDYIPRPDFRPLTKFEARGHRLGHGVWDLYFVKK</sequence>
<feature type="chain" id="PRO_1000064396" description="tRNA (guanine-N(7)-)-methyltransferase">
    <location>
        <begin position="1"/>
        <end position="246"/>
    </location>
</feature>
<feature type="active site" evidence="1">
    <location>
        <position position="152"/>
    </location>
</feature>
<feature type="binding site" evidence="2">
    <location>
        <position position="77"/>
    </location>
    <ligand>
        <name>S-adenosyl-L-methionine</name>
        <dbReference type="ChEBI" id="CHEBI:59789"/>
    </ligand>
</feature>
<feature type="binding site" evidence="2">
    <location>
        <position position="102"/>
    </location>
    <ligand>
        <name>S-adenosyl-L-methionine</name>
        <dbReference type="ChEBI" id="CHEBI:59789"/>
    </ligand>
</feature>
<feature type="binding site" evidence="2">
    <location>
        <position position="129"/>
    </location>
    <ligand>
        <name>S-adenosyl-L-methionine</name>
        <dbReference type="ChEBI" id="CHEBI:59789"/>
    </ligand>
</feature>
<feature type="binding site" evidence="2">
    <location>
        <position position="152"/>
    </location>
    <ligand>
        <name>S-adenosyl-L-methionine</name>
        <dbReference type="ChEBI" id="CHEBI:59789"/>
    </ligand>
</feature>
<feature type="binding site" evidence="2">
    <location>
        <position position="156"/>
    </location>
    <ligand>
        <name>substrate</name>
    </ligand>
</feature>
<feature type="binding site" evidence="2">
    <location>
        <position position="188"/>
    </location>
    <ligand>
        <name>substrate</name>
    </ligand>
</feature>
<feature type="binding site" evidence="2">
    <location>
        <begin position="225"/>
        <end position="228"/>
    </location>
    <ligand>
        <name>substrate</name>
    </ligand>
</feature>
<dbReference type="EC" id="2.1.1.33" evidence="2"/>
<dbReference type="EMBL" id="CP000671">
    <property type="protein sequence ID" value="ABQ97746.1"/>
    <property type="molecule type" value="Genomic_DNA"/>
</dbReference>
<dbReference type="SMR" id="A5UAE5"/>
<dbReference type="KEGG" id="hip:CGSHiEE_01300"/>
<dbReference type="HOGENOM" id="CLU_050910_0_1_6"/>
<dbReference type="UniPathway" id="UPA00989"/>
<dbReference type="GO" id="GO:0043527">
    <property type="term" value="C:tRNA methyltransferase complex"/>
    <property type="evidence" value="ECO:0007669"/>
    <property type="project" value="TreeGrafter"/>
</dbReference>
<dbReference type="GO" id="GO:0008176">
    <property type="term" value="F:tRNA (guanine(46)-N7)-methyltransferase activity"/>
    <property type="evidence" value="ECO:0007669"/>
    <property type="project" value="UniProtKB-UniRule"/>
</dbReference>
<dbReference type="FunFam" id="3.40.50.150:FF:000035">
    <property type="entry name" value="tRNA (guanine-N(7)-)-methyltransferase"/>
    <property type="match status" value="1"/>
</dbReference>
<dbReference type="Gene3D" id="3.40.50.150">
    <property type="entry name" value="Vaccinia Virus protein VP39"/>
    <property type="match status" value="1"/>
</dbReference>
<dbReference type="HAMAP" id="MF_01057">
    <property type="entry name" value="tRNA_methyltr_TrmB"/>
    <property type="match status" value="1"/>
</dbReference>
<dbReference type="InterPro" id="IPR029063">
    <property type="entry name" value="SAM-dependent_MTases_sf"/>
</dbReference>
<dbReference type="InterPro" id="IPR003358">
    <property type="entry name" value="tRNA_(Gua-N-7)_MeTrfase_Trmb"/>
</dbReference>
<dbReference type="InterPro" id="IPR055361">
    <property type="entry name" value="tRNA_methyltr_TrmB_bact"/>
</dbReference>
<dbReference type="NCBIfam" id="TIGR00091">
    <property type="entry name" value="tRNA (guanosine(46)-N7)-methyltransferase TrmB"/>
    <property type="match status" value="1"/>
</dbReference>
<dbReference type="PANTHER" id="PTHR23417">
    <property type="entry name" value="3-DEOXY-D-MANNO-OCTULOSONIC-ACID TRANSFERASE/TRNA GUANINE-N 7 - -METHYLTRANSFERASE"/>
    <property type="match status" value="1"/>
</dbReference>
<dbReference type="PANTHER" id="PTHR23417:SF14">
    <property type="entry name" value="PENTACOTRIPEPTIDE-REPEAT REGION OF PRORP DOMAIN-CONTAINING PROTEIN"/>
    <property type="match status" value="1"/>
</dbReference>
<dbReference type="Pfam" id="PF02390">
    <property type="entry name" value="Methyltransf_4"/>
    <property type="match status" value="1"/>
</dbReference>
<dbReference type="SUPFAM" id="SSF53335">
    <property type="entry name" value="S-adenosyl-L-methionine-dependent methyltransferases"/>
    <property type="match status" value="1"/>
</dbReference>
<dbReference type="PROSITE" id="PS51625">
    <property type="entry name" value="SAM_MT_TRMB"/>
    <property type="match status" value="1"/>
</dbReference>
<keyword id="KW-0489">Methyltransferase</keyword>
<keyword id="KW-0949">S-adenosyl-L-methionine</keyword>
<keyword id="KW-0808">Transferase</keyword>
<keyword id="KW-0819">tRNA processing</keyword>
<accession>A5UAE5</accession>
<protein>
    <recommendedName>
        <fullName evidence="2">tRNA (guanine-N(7)-)-methyltransferase</fullName>
        <ecNumber evidence="2">2.1.1.33</ecNumber>
    </recommendedName>
    <alternativeName>
        <fullName evidence="2">tRNA (guanine(46)-N(7))-methyltransferase</fullName>
    </alternativeName>
    <alternativeName>
        <fullName evidence="2">tRNA(m7G46)-methyltransferase</fullName>
    </alternativeName>
</protein>
<gene>
    <name evidence="2" type="primary">trmB</name>
    <name type="ordered locus">CGSHiEE_01300</name>
</gene>
<name>TRMB_HAEIE</name>
<organism>
    <name type="scientific">Haemophilus influenzae (strain PittEE)</name>
    <dbReference type="NCBI Taxonomy" id="374930"/>
    <lineage>
        <taxon>Bacteria</taxon>
        <taxon>Pseudomonadati</taxon>
        <taxon>Pseudomonadota</taxon>
        <taxon>Gammaproteobacteria</taxon>
        <taxon>Pasteurellales</taxon>
        <taxon>Pasteurellaceae</taxon>
        <taxon>Haemophilus</taxon>
    </lineage>
</organism>
<comment type="function">
    <text evidence="2">Catalyzes the formation of N(7)-methylguanine at position 46 (m7G46) in tRNA.</text>
</comment>
<comment type="catalytic activity">
    <reaction evidence="2">
        <text>guanosine(46) in tRNA + S-adenosyl-L-methionine = N(7)-methylguanosine(46) in tRNA + S-adenosyl-L-homocysteine</text>
        <dbReference type="Rhea" id="RHEA:42708"/>
        <dbReference type="Rhea" id="RHEA-COMP:10188"/>
        <dbReference type="Rhea" id="RHEA-COMP:10189"/>
        <dbReference type="ChEBI" id="CHEBI:57856"/>
        <dbReference type="ChEBI" id="CHEBI:59789"/>
        <dbReference type="ChEBI" id="CHEBI:74269"/>
        <dbReference type="ChEBI" id="CHEBI:74480"/>
        <dbReference type="EC" id="2.1.1.33"/>
    </reaction>
</comment>
<comment type="pathway">
    <text evidence="2">tRNA modification; N(7)-methylguanine-tRNA biosynthesis.</text>
</comment>
<comment type="similarity">
    <text evidence="2">Belongs to the class I-like SAM-binding methyltransferase superfamily. TrmB family.</text>
</comment>
<evidence type="ECO:0000250" key="1"/>
<evidence type="ECO:0000255" key="2">
    <source>
        <dbReference type="HAMAP-Rule" id="MF_01057"/>
    </source>
</evidence>
<proteinExistence type="inferred from homology"/>
<reference key="1">
    <citation type="journal article" date="2007" name="Genome Biol.">
        <title>Characterization and modeling of the Haemophilus influenzae core and supragenomes based on the complete genomic sequences of Rd and 12 clinical nontypeable strains.</title>
        <authorList>
            <person name="Hogg J.S."/>
            <person name="Hu F.Z."/>
            <person name="Janto B."/>
            <person name="Boissy R."/>
            <person name="Hayes J."/>
            <person name="Keefe R."/>
            <person name="Post J.C."/>
            <person name="Ehrlich G.D."/>
        </authorList>
    </citation>
    <scope>NUCLEOTIDE SEQUENCE [LARGE SCALE GENOMIC DNA]</scope>
    <source>
        <strain>PittEE</strain>
    </source>
</reference>